<proteinExistence type="inferred from homology"/>
<organism>
    <name type="scientific">Carboxydothermus hydrogenoformans (strain ATCC BAA-161 / DSM 6008 / Z-2901)</name>
    <dbReference type="NCBI Taxonomy" id="246194"/>
    <lineage>
        <taxon>Bacteria</taxon>
        <taxon>Bacillati</taxon>
        <taxon>Bacillota</taxon>
        <taxon>Clostridia</taxon>
        <taxon>Thermoanaerobacterales</taxon>
        <taxon>Thermoanaerobacteraceae</taxon>
        <taxon>Carboxydothermus</taxon>
    </lineage>
</organism>
<keyword id="KW-0001">2Fe-2S</keyword>
<keyword id="KW-0004">4Fe-4S</keyword>
<keyword id="KW-0093">Biotin biosynthesis</keyword>
<keyword id="KW-0408">Iron</keyword>
<keyword id="KW-0411">Iron-sulfur</keyword>
<keyword id="KW-0479">Metal-binding</keyword>
<keyword id="KW-1185">Reference proteome</keyword>
<keyword id="KW-0949">S-adenosyl-L-methionine</keyword>
<keyword id="KW-0808">Transferase</keyword>
<name>BIOB_CARHZ</name>
<feature type="chain" id="PRO_0000381290" description="Biotin synthase">
    <location>
        <begin position="1"/>
        <end position="325"/>
    </location>
</feature>
<feature type="domain" description="Radical SAM core" evidence="2">
    <location>
        <begin position="49"/>
        <end position="279"/>
    </location>
</feature>
<feature type="binding site" evidence="1">
    <location>
        <position position="66"/>
    </location>
    <ligand>
        <name>[4Fe-4S] cluster</name>
        <dbReference type="ChEBI" id="CHEBI:49883"/>
        <note>4Fe-4S-S-AdoMet</note>
    </ligand>
</feature>
<feature type="binding site" evidence="1">
    <location>
        <position position="70"/>
    </location>
    <ligand>
        <name>[4Fe-4S] cluster</name>
        <dbReference type="ChEBI" id="CHEBI:49883"/>
        <note>4Fe-4S-S-AdoMet</note>
    </ligand>
</feature>
<feature type="binding site" evidence="1">
    <location>
        <position position="73"/>
    </location>
    <ligand>
        <name>[4Fe-4S] cluster</name>
        <dbReference type="ChEBI" id="CHEBI:49883"/>
        <note>4Fe-4S-S-AdoMet</note>
    </ligand>
</feature>
<feature type="binding site" evidence="1">
    <location>
        <position position="144"/>
    </location>
    <ligand>
        <name>[2Fe-2S] cluster</name>
        <dbReference type="ChEBI" id="CHEBI:190135"/>
    </ligand>
</feature>
<feature type="binding site" evidence="1">
    <location>
        <position position="204"/>
    </location>
    <ligand>
        <name>[2Fe-2S] cluster</name>
        <dbReference type="ChEBI" id="CHEBI:190135"/>
    </ligand>
</feature>
<feature type="binding site" evidence="1">
    <location>
        <position position="274"/>
    </location>
    <ligand>
        <name>[2Fe-2S] cluster</name>
        <dbReference type="ChEBI" id="CHEBI:190135"/>
    </ligand>
</feature>
<evidence type="ECO:0000255" key="1">
    <source>
        <dbReference type="HAMAP-Rule" id="MF_01694"/>
    </source>
</evidence>
<evidence type="ECO:0000255" key="2">
    <source>
        <dbReference type="PROSITE-ProRule" id="PRU01266"/>
    </source>
</evidence>
<comment type="function">
    <text evidence="1">Catalyzes the conversion of dethiobiotin (DTB) to biotin by the insertion of a sulfur atom into dethiobiotin via a radical-based mechanism.</text>
</comment>
<comment type="catalytic activity">
    <reaction evidence="1">
        <text>(4R,5S)-dethiobiotin + (sulfur carrier)-SH + 2 reduced [2Fe-2S]-[ferredoxin] + 2 S-adenosyl-L-methionine = (sulfur carrier)-H + biotin + 2 5'-deoxyadenosine + 2 L-methionine + 2 oxidized [2Fe-2S]-[ferredoxin]</text>
        <dbReference type="Rhea" id="RHEA:22060"/>
        <dbReference type="Rhea" id="RHEA-COMP:10000"/>
        <dbReference type="Rhea" id="RHEA-COMP:10001"/>
        <dbReference type="Rhea" id="RHEA-COMP:14737"/>
        <dbReference type="Rhea" id="RHEA-COMP:14739"/>
        <dbReference type="ChEBI" id="CHEBI:17319"/>
        <dbReference type="ChEBI" id="CHEBI:29917"/>
        <dbReference type="ChEBI" id="CHEBI:33737"/>
        <dbReference type="ChEBI" id="CHEBI:33738"/>
        <dbReference type="ChEBI" id="CHEBI:57586"/>
        <dbReference type="ChEBI" id="CHEBI:57844"/>
        <dbReference type="ChEBI" id="CHEBI:59789"/>
        <dbReference type="ChEBI" id="CHEBI:64428"/>
        <dbReference type="ChEBI" id="CHEBI:149473"/>
        <dbReference type="EC" id="2.8.1.6"/>
    </reaction>
</comment>
<comment type="cofactor">
    <cofactor evidence="1">
        <name>[4Fe-4S] cluster</name>
        <dbReference type="ChEBI" id="CHEBI:49883"/>
    </cofactor>
    <text evidence="1">Binds 1 [4Fe-4S] cluster. The cluster is coordinated with 3 cysteines and an exchangeable S-adenosyl-L-methionine.</text>
</comment>
<comment type="cofactor">
    <cofactor evidence="1">
        <name>[2Fe-2S] cluster</name>
        <dbReference type="ChEBI" id="CHEBI:190135"/>
    </cofactor>
    <text evidence="1">Binds 1 [2Fe-2S] cluster. The cluster is coordinated with 3 cysteines and 1 arginine.</text>
</comment>
<comment type="pathway">
    <text evidence="1">Cofactor biosynthesis; biotin biosynthesis; biotin from 7,8-diaminononanoate: step 2/2.</text>
</comment>
<comment type="subunit">
    <text evidence="1">Homodimer.</text>
</comment>
<comment type="similarity">
    <text evidence="1">Belongs to the radical SAM superfamily. Biotin synthase family.</text>
</comment>
<reference key="1">
    <citation type="journal article" date="2005" name="PLoS Genet.">
        <title>Life in hot carbon monoxide: the complete genome sequence of Carboxydothermus hydrogenoformans Z-2901.</title>
        <authorList>
            <person name="Wu M."/>
            <person name="Ren Q."/>
            <person name="Durkin A.S."/>
            <person name="Daugherty S.C."/>
            <person name="Brinkac L.M."/>
            <person name="Dodson R.J."/>
            <person name="Madupu R."/>
            <person name="Sullivan S.A."/>
            <person name="Kolonay J.F."/>
            <person name="Nelson W.C."/>
            <person name="Tallon L.J."/>
            <person name="Jones K.M."/>
            <person name="Ulrich L.E."/>
            <person name="Gonzalez J.M."/>
            <person name="Zhulin I.B."/>
            <person name="Robb F.T."/>
            <person name="Eisen J.A."/>
        </authorList>
    </citation>
    <scope>NUCLEOTIDE SEQUENCE [LARGE SCALE GENOMIC DNA]</scope>
    <source>
        <strain>ATCC BAA-161 / DSM 6008 / Z-2901</strain>
    </source>
</reference>
<sequence>MFNRIVALTQKVLDGGQINQIEALELAQAEGADILILAAMAAKIREKYVGDKVELCSIISVKTGHCPEDCAFCAQSVHHHTEITPTEMLEEEKILAKAKAMEAAGAHRFDLVTAGLGMTEEDEDFKKILAIYKRLRQEVKLELCACLGTLTEKAAMQLREVGVTRYNHNLETARSFFSNIVTTHTYDERIETIKNVKKAGMEVCCGGIIGMGETMEQRIEFAFTLKELDVDAIPINVLNPIKGTKLENRPLLSPLEVIKTFAIFRFILPDKNIRYAGGREVNLRDMQALGLMAGLNGMLIGHYLTTKGREVETDLQMIRDLGLKI</sequence>
<dbReference type="EC" id="2.8.1.6" evidence="1"/>
<dbReference type="EMBL" id="CP000141">
    <property type="protein sequence ID" value="ABB13966.1"/>
    <property type="molecule type" value="Genomic_DNA"/>
</dbReference>
<dbReference type="RefSeq" id="WP_011343815.1">
    <property type="nucleotide sequence ID" value="NC_007503.1"/>
</dbReference>
<dbReference type="SMR" id="Q3ADP5"/>
<dbReference type="FunCoup" id="Q3ADP5">
    <property type="interactions" value="335"/>
</dbReference>
<dbReference type="STRING" id="246194.CHY_0889"/>
<dbReference type="KEGG" id="chy:CHY_0889"/>
<dbReference type="eggNOG" id="COG0502">
    <property type="taxonomic scope" value="Bacteria"/>
</dbReference>
<dbReference type="HOGENOM" id="CLU_033172_2_1_9"/>
<dbReference type="InParanoid" id="Q3ADP5"/>
<dbReference type="OrthoDB" id="9786826at2"/>
<dbReference type="UniPathway" id="UPA00078">
    <property type="reaction ID" value="UER00162"/>
</dbReference>
<dbReference type="Proteomes" id="UP000002706">
    <property type="component" value="Chromosome"/>
</dbReference>
<dbReference type="GO" id="GO:0051537">
    <property type="term" value="F:2 iron, 2 sulfur cluster binding"/>
    <property type="evidence" value="ECO:0007669"/>
    <property type="project" value="UniProtKB-KW"/>
</dbReference>
<dbReference type="GO" id="GO:0051539">
    <property type="term" value="F:4 iron, 4 sulfur cluster binding"/>
    <property type="evidence" value="ECO:0007669"/>
    <property type="project" value="UniProtKB-KW"/>
</dbReference>
<dbReference type="GO" id="GO:0004076">
    <property type="term" value="F:biotin synthase activity"/>
    <property type="evidence" value="ECO:0007669"/>
    <property type="project" value="UniProtKB-UniRule"/>
</dbReference>
<dbReference type="GO" id="GO:0005506">
    <property type="term" value="F:iron ion binding"/>
    <property type="evidence" value="ECO:0007669"/>
    <property type="project" value="UniProtKB-UniRule"/>
</dbReference>
<dbReference type="GO" id="GO:0009102">
    <property type="term" value="P:biotin biosynthetic process"/>
    <property type="evidence" value="ECO:0007669"/>
    <property type="project" value="UniProtKB-UniRule"/>
</dbReference>
<dbReference type="CDD" id="cd01335">
    <property type="entry name" value="Radical_SAM"/>
    <property type="match status" value="1"/>
</dbReference>
<dbReference type="FunFam" id="3.20.20.70:FF:000026">
    <property type="entry name" value="Biotin synthase"/>
    <property type="match status" value="1"/>
</dbReference>
<dbReference type="Gene3D" id="3.20.20.70">
    <property type="entry name" value="Aldolase class I"/>
    <property type="match status" value="1"/>
</dbReference>
<dbReference type="HAMAP" id="MF_01694">
    <property type="entry name" value="BioB"/>
    <property type="match status" value="1"/>
</dbReference>
<dbReference type="InterPro" id="IPR013785">
    <property type="entry name" value="Aldolase_TIM"/>
</dbReference>
<dbReference type="InterPro" id="IPR010722">
    <property type="entry name" value="BATS_dom"/>
</dbReference>
<dbReference type="InterPro" id="IPR002684">
    <property type="entry name" value="Biotin_synth/BioAB"/>
</dbReference>
<dbReference type="InterPro" id="IPR024177">
    <property type="entry name" value="Biotin_synthase"/>
</dbReference>
<dbReference type="InterPro" id="IPR006638">
    <property type="entry name" value="Elp3/MiaA/NifB-like_rSAM"/>
</dbReference>
<dbReference type="InterPro" id="IPR007197">
    <property type="entry name" value="rSAM"/>
</dbReference>
<dbReference type="NCBIfam" id="TIGR00433">
    <property type="entry name" value="bioB"/>
    <property type="match status" value="1"/>
</dbReference>
<dbReference type="PANTHER" id="PTHR22976">
    <property type="entry name" value="BIOTIN SYNTHASE"/>
    <property type="match status" value="1"/>
</dbReference>
<dbReference type="PANTHER" id="PTHR22976:SF2">
    <property type="entry name" value="BIOTIN SYNTHASE, MITOCHONDRIAL"/>
    <property type="match status" value="1"/>
</dbReference>
<dbReference type="Pfam" id="PF06968">
    <property type="entry name" value="BATS"/>
    <property type="match status" value="1"/>
</dbReference>
<dbReference type="Pfam" id="PF04055">
    <property type="entry name" value="Radical_SAM"/>
    <property type="match status" value="1"/>
</dbReference>
<dbReference type="PIRSF" id="PIRSF001619">
    <property type="entry name" value="Biotin_synth"/>
    <property type="match status" value="1"/>
</dbReference>
<dbReference type="SFLD" id="SFLDG01060">
    <property type="entry name" value="BATS_domain_containing"/>
    <property type="match status" value="1"/>
</dbReference>
<dbReference type="SFLD" id="SFLDG01278">
    <property type="entry name" value="biotin_synthase_like"/>
    <property type="match status" value="1"/>
</dbReference>
<dbReference type="SMART" id="SM00876">
    <property type="entry name" value="BATS"/>
    <property type="match status" value="1"/>
</dbReference>
<dbReference type="SMART" id="SM00729">
    <property type="entry name" value="Elp3"/>
    <property type="match status" value="1"/>
</dbReference>
<dbReference type="SUPFAM" id="SSF102114">
    <property type="entry name" value="Radical SAM enzymes"/>
    <property type="match status" value="1"/>
</dbReference>
<dbReference type="PROSITE" id="PS51918">
    <property type="entry name" value="RADICAL_SAM"/>
    <property type="match status" value="1"/>
</dbReference>
<protein>
    <recommendedName>
        <fullName evidence="1">Biotin synthase</fullName>
        <ecNumber evidence="1">2.8.1.6</ecNumber>
    </recommendedName>
</protein>
<accession>Q3ADP5</accession>
<gene>
    <name evidence="1" type="primary">bioB</name>
    <name type="ordered locus">CHY_0889</name>
</gene>